<sequence>MAKVKVCGITSVEDALVAAGAGADAVGFVFFERSPRRVGVERAREISGALPGGVLRVGVFVNTPPEEVLRVASLVGLDYAQLHGDEGPEEVRRVREGGLGVIKALRVRDAGSLSEIERYPEADLFLLDAWREGLYGGTGTPFDWELAKRLRGCANIVVSGGLTPENVRAAIERLDPYGVDASSSLEEAPGKKSGELVRRFVSAAKS</sequence>
<proteinExistence type="inferred from homology"/>
<comment type="catalytic activity">
    <reaction evidence="1">
        <text>N-(5-phospho-beta-D-ribosyl)anthranilate = 1-(2-carboxyphenylamino)-1-deoxy-D-ribulose 5-phosphate</text>
        <dbReference type="Rhea" id="RHEA:21540"/>
        <dbReference type="ChEBI" id="CHEBI:18277"/>
        <dbReference type="ChEBI" id="CHEBI:58613"/>
        <dbReference type="EC" id="5.3.1.24"/>
    </reaction>
</comment>
<comment type="pathway">
    <text evidence="1">Amino-acid biosynthesis; L-tryptophan biosynthesis; L-tryptophan from chorismate: step 3/5.</text>
</comment>
<comment type="similarity">
    <text evidence="1">Belongs to the TrpF family.</text>
</comment>
<organism>
    <name type="scientific">Rubrobacter xylanophilus (strain DSM 9941 / JCM 11954 / NBRC 16129 / PRD-1)</name>
    <dbReference type="NCBI Taxonomy" id="266117"/>
    <lineage>
        <taxon>Bacteria</taxon>
        <taxon>Bacillati</taxon>
        <taxon>Actinomycetota</taxon>
        <taxon>Rubrobacteria</taxon>
        <taxon>Rubrobacterales</taxon>
        <taxon>Rubrobacteraceae</taxon>
        <taxon>Rubrobacter</taxon>
    </lineage>
</organism>
<keyword id="KW-0028">Amino-acid biosynthesis</keyword>
<keyword id="KW-0057">Aromatic amino acid biosynthesis</keyword>
<keyword id="KW-0413">Isomerase</keyword>
<keyword id="KW-1185">Reference proteome</keyword>
<keyword id="KW-0822">Tryptophan biosynthesis</keyword>
<gene>
    <name evidence="1" type="primary">trpF</name>
    <name type="ordered locus">Rxyl_2091</name>
</gene>
<accession>Q1AU93</accession>
<reference key="1">
    <citation type="submission" date="2006-06" db="EMBL/GenBank/DDBJ databases">
        <title>Complete sequence of Rubrobacter xylanophilus DSM 9941.</title>
        <authorList>
            <consortium name="US DOE Joint Genome Institute"/>
            <person name="Copeland A."/>
            <person name="Lucas S."/>
            <person name="Lapidus A."/>
            <person name="Barry K."/>
            <person name="Detter J.C."/>
            <person name="Glavina del Rio T."/>
            <person name="Hammon N."/>
            <person name="Israni S."/>
            <person name="Dalin E."/>
            <person name="Tice H."/>
            <person name="Pitluck S."/>
            <person name="Munk A.C."/>
            <person name="Brettin T."/>
            <person name="Bruce D."/>
            <person name="Han C."/>
            <person name="Tapia R."/>
            <person name="Gilna P."/>
            <person name="Schmutz J."/>
            <person name="Larimer F."/>
            <person name="Land M."/>
            <person name="Hauser L."/>
            <person name="Kyrpides N."/>
            <person name="Lykidis A."/>
            <person name="da Costa M.S."/>
            <person name="Rainey F.A."/>
            <person name="Empadinhas N."/>
            <person name="Jolivet E."/>
            <person name="Battista J.R."/>
            <person name="Richardson P."/>
        </authorList>
    </citation>
    <scope>NUCLEOTIDE SEQUENCE [LARGE SCALE GENOMIC DNA]</scope>
    <source>
        <strain>DSM 9941 / JCM 11954 / NBRC 16129 / PRD-1</strain>
    </source>
</reference>
<name>TRPF_RUBXD</name>
<feature type="chain" id="PRO_1000095939" description="N-(5'-phosphoribosyl)anthranilate isomerase">
    <location>
        <begin position="1"/>
        <end position="206"/>
    </location>
</feature>
<dbReference type="EC" id="5.3.1.24" evidence="1"/>
<dbReference type="EMBL" id="CP000386">
    <property type="protein sequence ID" value="ABG05035.1"/>
    <property type="molecule type" value="Genomic_DNA"/>
</dbReference>
<dbReference type="RefSeq" id="WP_011565050.1">
    <property type="nucleotide sequence ID" value="NC_008148.1"/>
</dbReference>
<dbReference type="SMR" id="Q1AU93"/>
<dbReference type="STRING" id="266117.Rxyl_2091"/>
<dbReference type="KEGG" id="rxy:Rxyl_2091"/>
<dbReference type="eggNOG" id="COG0135">
    <property type="taxonomic scope" value="Bacteria"/>
</dbReference>
<dbReference type="HOGENOM" id="CLU_076364_1_1_11"/>
<dbReference type="OrthoDB" id="3243379at2"/>
<dbReference type="PhylomeDB" id="Q1AU93"/>
<dbReference type="UniPathway" id="UPA00035">
    <property type="reaction ID" value="UER00042"/>
</dbReference>
<dbReference type="Proteomes" id="UP000006637">
    <property type="component" value="Chromosome"/>
</dbReference>
<dbReference type="GO" id="GO:0004640">
    <property type="term" value="F:phosphoribosylanthranilate isomerase activity"/>
    <property type="evidence" value="ECO:0007669"/>
    <property type="project" value="UniProtKB-UniRule"/>
</dbReference>
<dbReference type="GO" id="GO:0000162">
    <property type="term" value="P:L-tryptophan biosynthetic process"/>
    <property type="evidence" value="ECO:0007669"/>
    <property type="project" value="UniProtKB-UniRule"/>
</dbReference>
<dbReference type="CDD" id="cd00405">
    <property type="entry name" value="PRAI"/>
    <property type="match status" value="1"/>
</dbReference>
<dbReference type="FunFam" id="3.20.20.70:FF:000075">
    <property type="entry name" value="Tryptophan biosynthesis protein TRP1"/>
    <property type="match status" value="1"/>
</dbReference>
<dbReference type="Gene3D" id="3.20.20.70">
    <property type="entry name" value="Aldolase class I"/>
    <property type="match status" value="1"/>
</dbReference>
<dbReference type="HAMAP" id="MF_00135">
    <property type="entry name" value="PRAI"/>
    <property type="match status" value="1"/>
</dbReference>
<dbReference type="InterPro" id="IPR013785">
    <property type="entry name" value="Aldolase_TIM"/>
</dbReference>
<dbReference type="InterPro" id="IPR001240">
    <property type="entry name" value="PRAI_dom"/>
</dbReference>
<dbReference type="InterPro" id="IPR011060">
    <property type="entry name" value="RibuloseP-bd_barrel"/>
</dbReference>
<dbReference type="InterPro" id="IPR044643">
    <property type="entry name" value="TrpF_fam"/>
</dbReference>
<dbReference type="NCBIfam" id="NF002298">
    <property type="entry name" value="PRK01222.1-4"/>
    <property type="match status" value="1"/>
</dbReference>
<dbReference type="PANTHER" id="PTHR42894">
    <property type="entry name" value="N-(5'-PHOSPHORIBOSYL)ANTHRANILATE ISOMERASE"/>
    <property type="match status" value="1"/>
</dbReference>
<dbReference type="PANTHER" id="PTHR42894:SF1">
    <property type="entry name" value="N-(5'-PHOSPHORIBOSYL)ANTHRANILATE ISOMERASE"/>
    <property type="match status" value="1"/>
</dbReference>
<dbReference type="Pfam" id="PF00697">
    <property type="entry name" value="PRAI"/>
    <property type="match status" value="1"/>
</dbReference>
<dbReference type="SUPFAM" id="SSF51366">
    <property type="entry name" value="Ribulose-phoshate binding barrel"/>
    <property type="match status" value="1"/>
</dbReference>
<evidence type="ECO:0000255" key="1">
    <source>
        <dbReference type="HAMAP-Rule" id="MF_00135"/>
    </source>
</evidence>
<protein>
    <recommendedName>
        <fullName evidence="1">N-(5'-phosphoribosyl)anthranilate isomerase</fullName>
        <shortName evidence="1">PRAI</shortName>
        <ecNumber evidence="1">5.3.1.24</ecNumber>
    </recommendedName>
</protein>